<evidence type="ECO:0000255" key="1">
    <source>
        <dbReference type="HAMAP-Rule" id="MF_00092"/>
    </source>
</evidence>
<comment type="function">
    <text evidence="1">Endonuclease that is involved in the suppression of homologous recombination and thus may have a key role in the control of bacterial genetic diversity.</text>
</comment>
<comment type="function">
    <text evidence="1">Acts as a ribosome collision sensor, splitting the ribosome into its 2 subunits. Detects stalled/collided 70S ribosomes which it binds and splits by an ATP-hydrolysis driven conformational change. Acts upstream of the ribosome quality control system (RQC), a ribosome-associated complex that mediates the extraction of incompletely synthesized nascent chains from stalled ribosomes and their subsequent degradation. Probably generates substrates for RQC.</text>
</comment>
<comment type="subunit">
    <text evidence="1">Homodimer. Binds to stalled ribosomes, contacting rRNA.</text>
</comment>
<comment type="similarity">
    <text evidence="1">Belongs to the DNA mismatch repair MutS family. MutS2 subfamily.</text>
</comment>
<protein>
    <recommendedName>
        <fullName evidence="1">Endonuclease MutS2</fullName>
        <ecNumber evidence="1">3.1.-.-</ecNumber>
    </recommendedName>
    <alternativeName>
        <fullName evidence="1">Ribosome-associated protein quality control-upstream factor</fullName>
        <shortName evidence="1">RQC-upstream factor</shortName>
        <shortName evidence="1">RqcU</shortName>
        <ecNumber evidence="1">3.6.4.-</ecNumber>
    </alternativeName>
</protein>
<sequence length="784" mass="88538">MHTRVLHVLEFDKVKEQLLEHVSSSLGKEKVEKLFPSSHFAEVTNWQEETDEAVAALRLRGHVPLGGIFDIRASLKRAKIGGTLSPHELLDIASTISASRQLKQFIESLHEEKEEFPHLAGYAEKLAALPEVQQAIERCIDDHGEVMDHASERLRSIRQQLRTTEARVREKLENIIRSQSAQKMLSDAIITIRNDRYVIPVKQEYRGVYGGIVHDQSASGATLFIEPQAVVELNNQLQEARVKEKREIERILTELTSIVAEHAEALLENVDILAQLDFIFAKAKYANKLKATKPVMNDRGYIRLLQARHPLIDQDVVVPNDIELGKDYTTIVITGPNTGGKTVTLKTIGLLTLMAQAGLFIPALDGSELAVFRSVYADIGDEQSIEQSLSTFSSHMVNIVDILRNVDHESLVLFDELGAGTDPQEGAALAIAILDEVHGRGARTVATTHYPELKAYGYNRDGVINASVEFDTETLRPTYKLLIGIPGRSNAFEISKRLGLDERIIERAKSHISAESNKVENMIASLEQSKKRAEEEEKKAKEARMEAEKLRSDWEQKWEELHEKRDEIIEEAKRKAADIVRASQQEAERIIRELRRMQKEKQAEIKEHELIEAKKRLEEAIPTLEKKKKERKKQTQHAFQPGDEVKVTSLNQKGYLVEKVSDDEWQVQLGILKMKINERDLEYIGSAPKTETKPLATVKGKDYHVGLELDLRGERYEDAIVRLEKYIDDALLAGYPRVSIIHGKGTGALRKGVQEFLKKHRSVKNFHFGEANEGGTGVTIVELK</sequence>
<proteinExistence type="inferred from homology"/>
<gene>
    <name evidence="1" type="primary">mutS2</name>
    <name evidence="1" type="synonym">rqcU</name>
    <name type="ordered locus">GWCH70_2632</name>
</gene>
<name>MUTS2_GEOSW</name>
<keyword id="KW-0067">ATP-binding</keyword>
<keyword id="KW-0238">DNA-binding</keyword>
<keyword id="KW-0255">Endonuclease</keyword>
<keyword id="KW-0378">Hydrolase</keyword>
<keyword id="KW-0540">Nuclease</keyword>
<keyword id="KW-0547">Nucleotide-binding</keyword>
<keyword id="KW-0694">RNA-binding</keyword>
<keyword id="KW-0699">rRNA-binding</keyword>
<dbReference type="EC" id="3.1.-.-" evidence="1"/>
<dbReference type="EC" id="3.6.4.-" evidence="1"/>
<dbReference type="EMBL" id="CP001638">
    <property type="protein sequence ID" value="ACS25326.1"/>
    <property type="molecule type" value="Genomic_DNA"/>
</dbReference>
<dbReference type="SMR" id="C5D5Q8"/>
<dbReference type="STRING" id="471223.GWCH70_2632"/>
<dbReference type="KEGG" id="gwc:GWCH70_2632"/>
<dbReference type="eggNOG" id="COG1193">
    <property type="taxonomic scope" value="Bacteria"/>
</dbReference>
<dbReference type="HOGENOM" id="CLU_011252_2_1_9"/>
<dbReference type="OrthoDB" id="9808166at2"/>
<dbReference type="GO" id="GO:0005524">
    <property type="term" value="F:ATP binding"/>
    <property type="evidence" value="ECO:0007669"/>
    <property type="project" value="UniProtKB-UniRule"/>
</dbReference>
<dbReference type="GO" id="GO:0016887">
    <property type="term" value="F:ATP hydrolysis activity"/>
    <property type="evidence" value="ECO:0007669"/>
    <property type="project" value="InterPro"/>
</dbReference>
<dbReference type="GO" id="GO:0140664">
    <property type="term" value="F:ATP-dependent DNA damage sensor activity"/>
    <property type="evidence" value="ECO:0007669"/>
    <property type="project" value="InterPro"/>
</dbReference>
<dbReference type="GO" id="GO:0004519">
    <property type="term" value="F:endonuclease activity"/>
    <property type="evidence" value="ECO:0007669"/>
    <property type="project" value="UniProtKB-UniRule"/>
</dbReference>
<dbReference type="GO" id="GO:0030983">
    <property type="term" value="F:mismatched DNA binding"/>
    <property type="evidence" value="ECO:0007669"/>
    <property type="project" value="InterPro"/>
</dbReference>
<dbReference type="GO" id="GO:0043023">
    <property type="term" value="F:ribosomal large subunit binding"/>
    <property type="evidence" value="ECO:0007669"/>
    <property type="project" value="UniProtKB-UniRule"/>
</dbReference>
<dbReference type="GO" id="GO:0019843">
    <property type="term" value="F:rRNA binding"/>
    <property type="evidence" value="ECO:0007669"/>
    <property type="project" value="UniProtKB-UniRule"/>
</dbReference>
<dbReference type="GO" id="GO:0006298">
    <property type="term" value="P:mismatch repair"/>
    <property type="evidence" value="ECO:0007669"/>
    <property type="project" value="InterPro"/>
</dbReference>
<dbReference type="GO" id="GO:0045910">
    <property type="term" value="P:negative regulation of DNA recombination"/>
    <property type="evidence" value="ECO:0007669"/>
    <property type="project" value="InterPro"/>
</dbReference>
<dbReference type="GO" id="GO:0072344">
    <property type="term" value="P:rescue of stalled ribosome"/>
    <property type="evidence" value="ECO:0007669"/>
    <property type="project" value="UniProtKB-UniRule"/>
</dbReference>
<dbReference type="CDD" id="cd03280">
    <property type="entry name" value="ABC_MutS2"/>
    <property type="match status" value="1"/>
</dbReference>
<dbReference type="CDD" id="cd06503">
    <property type="entry name" value="ATP-synt_Fo_b"/>
    <property type="match status" value="1"/>
</dbReference>
<dbReference type="FunFam" id="3.40.50.300:FF:000830">
    <property type="entry name" value="Endonuclease MutS2"/>
    <property type="match status" value="1"/>
</dbReference>
<dbReference type="Gene3D" id="1.10.1420.10">
    <property type="match status" value="2"/>
</dbReference>
<dbReference type="Gene3D" id="3.30.1370.110">
    <property type="match status" value="1"/>
</dbReference>
<dbReference type="Gene3D" id="3.40.50.300">
    <property type="entry name" value="P-loop containing nucleotide triphosphate hydrolases"/>
    <property type="match status" value="1"/>
</dbReference>
<dbReference type="HAMAP" id="MF_00092">
    <property type="entry name" value="MutS2"/>
    <property type="match status" value="1"/>
</dbReference>
<dbReference type="InterPro" id="IPR000432">
    <property type="entry name" value="DNA_mismatch_repair_MutS_C"/>
</dbReference>
<dbReference type="InterPro" id="IPR007696">
    <property type="entry name" value="DNA_mismatch_repair_MutS_core"/>
</dbReference>
<dbReference type="InterPro" id="IPR036187">
    <property type="entry name" value="DNA_mismatch_repair_MutS_sf"/>
</dbReference>
<dbReference type="InterPro" id="IPR046893">
    <property type="entry name" value="MSSS"/>
</dbReference>
<dbReference type="InterPro" id="IPR045076">
    <property type="entry name" value="MutS"/>
</dbReference>
<dbReference type="InterPro" id="IPR005747">
    <property type="entry name" value="MutS2"/>
</dbReference>
<dbReference type="InterPro" id="IPR027417">
    <property type="entry name" value="P-loop_NTPase"/>
</dbReference>
<dbReference type="InterPro" id="IPR002625">
    <property type="entry name" value="Smr_dom"/>
</dbReference>
<dbReference type="InterPro" id="IPR036063">
    <property type="entry name" value="Smr_dom_sf"/>
</dbReference>
<dbReference type="NCBIfam" id="TIGR01069">
    <property type="entry name" value="mutS2"/>
    <property type="match status" value="1"/>
</dbReference>
<dbReference type="PANTHER" id="PTHR48466:SF2">
    <property type="entry name" value="OS10G0509000 PROTEIN"/>
    <property type="match status" value="1"/>
</dbReference>
<dbReference type="PANTHER" id="PTHR48466">
    <property type="entry name" value="OS10G0509000 PROTEIN-RELATED"/>
    <property type="match status" value="1"/>
</dbReference>
<dbReference type="Pfam" id="PF20297">
    <property type="entry name" value="MSSS"/>
    <property type="match status" value="1"/>
</dbReference>
<dbReference type="Pfam" id="PF00488">
    <property type="entry name" value="MutS_V"/>
    <property type="match status" value="1"/>
</dbReference>
<dbReference type="Pfam" id="PF01713">
    <property type="entry name" value="Smr"/>
    <property type="match status" value="1"/>
</dbReference>
<dbReference type="PIRSF" id="PIRSF005814">
    <property type="entry name" value="MutS_YshD"/>
    <property type="match status" value="1"/>
</dbReference>
<dbReference type="SMART" id="SM00534">
    <property type="entry name" value="MUTSac"/>
    <property type="match status" value="1"/>
</dbReference>
<dbReference type="SMART" id="SM00533">
    <property type="entry name" value="MUTSd"/>
    <property type="match status" value="1"/>
</dbReference>
<dbReference type="SMART" id="SM00463">
    <property type="entry name" value="SMR"/>
    <property type="match status" value="1"/>
</dbReference>
<dbReference type="SUPFAM" id="SSF48334">
    <property type="entry name" value="DNA repair protein MutS, domain III"/>
    <property type="match status" value="1"/>
</dbReference>
<dbReference type="SUPFAM" id="SSF52540">
    <property type="entry name" value="P-loop containing nucleoside triphosphate hydrolases"/>
    <property type="match status" value="1"/>
</dbReference>
<dbReference type="SUPFAM" id="SSF160443">
    <property type="entry name" value="SMR domain-like"/>
    <property type="match status" value="1"/>
</dbReference>
<dbReference type="PROSITE" id="PS00486">
    <property type="entry name" value="DNA_MISMATCH_REPAIR_2"/>
    <property type="match status" value="1"/>
</dbReference>
<dbReference type="PROSITE" id="PS50828">
    <property type="entry name" value="SMR"/>
    <property type="match status" value="1"/>
</dbReference>
<accession>C5D5Q8</accession>
<feature type="chain" id="PRO_1000202682" description="Endonuclease MutS2">
    <location>
        <begin position="1"/>
        <end position="784"/>
    </location>
</feature>
<feature type="domain" description="Smr" evidence="1">
    <location>
        <begin position="709"/>
        <end position="784"/>
    </location>
</feature>
<feature type="binding site" evidence="1">
    <location>
        <begin position="335"/>
        <end position="342"/>
    </location>
    <ligand>
        <name>ATP</name>
        <dbReference type="ChEBI" id="CHEBI:30616"/>
    </ligand>
</feature>
<reference key="1">
    <citation type="submission" date="2009-06" db="EMBL/GenBank/DDBJ databases">
        <title>Complete sequence of chromosome of Geopacillus sp. WCH70.</title>
        <authorList>
            <consortium name="US DOE Joint Genome Institute"/>
            <person name="Lucas S."/>
            <person name="Copeland A."/>
            <person name="Lapidus A."/>
            <person name="Glavina del Rio T."/>
            <person name="Dalin E."/>
            <person name="Tice H."/>
            <person name="Bruce D."/>
            <person name="Goodwin L."/>
            <person name="Pitluck S."/>
            <person name="Chertkov O."/>
            <person name="Brettin T."/>
            <person name="Detter J.C."/>
            <person name="Han C."/>
            <person name="Larimer F."/>
            <person name="Land M."/>
            <person name="Hauser L."/>
            <person name="Kyrpides N."/>
            <person name="Mikhailova N."/>
            <person name="Brumm P."/>
            <person name="Mead D.A."/>
            <person name="Richardson P."/>
        </authorList>
    </citation>
    <scope>NUCLEOTIDE SEQUENCE [LARGE SCALE GENOMIC DNA]</scope>
    <source>
        <strain>WCH70</strain>
    </source>
</reference>
<organism>
    <name type="scientific">Geobacillus sp. (strain WCH70)</name>
    <dbReference type="NCBI Taxonomy" id="471223"/>
    <lineage>
        <taxon>Bacteria</taxon>
        <taxon>Bacillati</taxon>
        <taxon>Bacillota</taxon>
        <taxon>Bacilli</taxon>
        <taxon>Bacillales</taxon>
        <taxon>Anoxybacillaceae</taxon>
        <taxon>Geobacillus</taxon>
    </lineage>
</organism>